<comment type="function">
    <text evidence="1">Involved in the gluconeogenesis. Catalyzes the conversion of oxaloacetate (OAA) to phosphoenolpyruvate (PEP) through direct phosphoryl transfer between the nucleoside triphosphate and OAA.</text>
</comment>
<comment type="catalytic activity">
    <reaction evidence="1">
        <text>oxaloacetate + ATP = phosphoenolpyruvate + ADP + CO2</text>
        <dbReference type="Rhea" id="RHEA:18617"/>
        <dbReference type="ChEBI" id="CHEBI:16452"/>
        <dbReference type="ChEBI" id="CHEBI:16526"/>
        <dbReference type="ChEBI" id="CHEBI:30616"/>
        <dbReference type="ChEBI" id="CHEBI:58702"/>
        <dbReference type="ChEBI" id="CHEBI:456216"/>
        <dbReference type="EC" id="4.1.1.49"/>
    </reaction>
</comment>
<comment type="cofactor">
    <cofactor evidence="1">
        <name>Mn(2+)</name>
        <dbReference type="ChEBI" id="CHEBI:29035"/>
    </cofactor>
    <text evidence="1">Binds 1 Mn(2+) ion per subunit.</text>
</comment>
<comment type="pathway">
    <text evidence="1">Carbohydrate biosynthesis; gluconeogenesis.</text>
</comment>
<comment type="subunit">
    <text evidence="1">Monomer.</text>
</comment>
<comment type="subcellular location">
    <subcellularLocation>
        <location evidence="1">Cytoplasm</location>
    </subcellularLocation>
</comment>
<comment type="similarity">
    <text evidence="1">Belongs to the phosphoenolpyruvate carboxykinase (ATP) family.</text>
</comment>
<name>PCKA_SHEPW</name>
<gene>
    <name evidence="1" type="primary">pckA</name>
    <name type="ordered locus">swp_0182</name>
</gene>
<organism>
    <name type="scientific">Shewanella piezotolerans (strain WP3 / JCM 13877)</name>
    <dbReference type="NCBI Taxonomy" id="225849"/>
    <lineage>
        <taxon>Bacteria</taxon>
        <taxon>Pseudomonadati</taxon>
        <taxon>Pseudomonadota</taxon>
        <taxon>Gammaproteobacteria</taxon>
        <taxon>Alteromonadales</taxon>
        <taxon>Shewanellaceae</taxon>
        <taxon>Shewanella</taxon>
    </lineage>
</organism>
<proteinExistence type="inferred from homology"/>
<protein>
    <recommendedName>
        <fullName evidence="1">Phosphoenolpyruvate carboxykinase (ATP)</fullName>
        <shortName evidence="1">PCK</shortName>
        <shortName evidence="1">PEP carboxykinase</shortName>
        <shortName evidence="1">PEPCK</shortName>
        <ecNumber evidence="1">4.1.1.49</ecNumber>
    </recommendedName>
</protein>
<feature type="chain" id="PRO_1000192333" description="Phosphoenolpyruvate carboxykinase (ATP)">
    <location>
        <begin position="1"/>
        <end position="513"/>
    </location>
</feature>
<feature type="binding site" evidence="1">
    <location>
        <position position="45"/>
    </location>
    <ligand>
        <name>substrate</name>
    </ligand>
</feature>
<feature type="binding site" evidence="1">
    <location>
        <position position="179"/>
    </location>
    <ligand>
        <name>substrate</name>
    </ligand>
</feature>
<feature type="binding site" evidence="1">
    <location>
        <position position="185"/>
    </location>
    <ligand>
        <name>ATP</name>
        <dbReference type="ChEBI" id="CHEBI:30616"/>
    </ligand>
</feature>
<feature type="binding site" evidence="1">
    <location>
        <position position="185"/>
    </location>
    <ligand>
        <name>Mn(2+)</name>
        <dbReference type="ChEBI" id="CHEBI:29035"/>
    </ligand>
</feature>
<feature type="binding site" evidence="1">
    <location>
        <position position="185"/>
    </location>
    <ligand>
        <name>substrate</name>
    </ligand>
</feature>
<feature type="binding site" evidence="1">
    <location>
        <position position="204"/>
    </location>
    <ligand>
        <name>ATP</name>
        <dbReference type="ChEBI" id="CHEBI:30616"/>
    </ligand>
</feature>
<feature type="binding site" evidence="1">
    <location>
        <position position="204"/>
    </location>
    <ligand>
        <name>Mn(2+)</name>
        <dbReference type="ChEBI" id="CHEBI:29035"/>
    </ligand>
</feature>
<feature type="binding site" evidence="1">
    <location>
        <begin position="220"/>
        <end position="228"/>
    </location>
    <ligand>
        <name>ATP</name>
        <dbReference type="ChEBI" id="CHEBI:30616"/>
    </ligand>
</feature>
<feature type="binding site" evidence="1">
    <location>
        <position position="241"/>
    </location>
    <ligand>
        <name>Mn(2+)</name>
        <dbReference type="ChEBI" id="CHEBI:29035"/>
    </ligand>
</feature>
<feature type="binding site" evidence="1">
    <location>
        <position position="269"/>
    </location>
    <ligand>
        <name>ATP</name>
        <dbReference type="ChEBI" id="CHEBI:30616"/>
    </ligand>
</feature>
<feature type="binding site" evidence="1">
    <location>
        <position position="305"/>
    </location>
    <ligand>
        <name>ATP</name>
        <dbReference type="ChEBI" id="CHEBI:30616"/>
    </ligand>
</feature>
<feature type="binding site" evidence="1">
    <location>
        <position position="305"/>
    </location>
    <ligand>
        <name>substrate</name>
    </ligand>
</feature>
<feature type="binding site" evidence="1">
    <location>
        <position position="431"/>
    </location>
    <ligand>
        <name>ATP</name>
        <dbReference type="ChEBI" id="CHEBI:30616"/>
    </ligand>
</feature>
<evidence type="ECO:0000255" key="1">
    <source>
        <dbReference type="HAMAP-Rule" id="MF_00453"/>
    </source>
</evidence>
<dbReference type="EC" id="4.1.1.49" evidence="1"/>
<dbReference type="EMBL" id="CP000472">
    <property type="protein sequence ID" value="ACJ27025.1"/>
    <property type="molecule type" value="Genomic_DNA"/>
</dbReference>
<dbReference type="RefSeq" id="WP_020910409.1">
    <property type="nucleotide sequence ID" value="NC_011566.1"/>
</dbReference>
<dbReference type="SMR" id="B8CH32"/>
<dbReference type="STRING" id="225849.swp_0182"/>
<dbReference type="KEGG" id="swp:swp_0182"/>
<dbReference type="eggNOG" id="COG1866">
    <property type="taxonomic scope" value="Bacteria"/>
</dbReference>
<dbReference type="HOGENOM" id="CLU_018247_0_1_6"/>
<dbReference type="OrthoDB" id="9806325at2"/>
<dbReference type="UniPathway" id="UPA00138"/>
<dbReference type="Proteomes" id="UP000000753">
    <property type="component" value="Chromosome"/>
</dbReference>
<dbReference type="GO" id="GO:0005829">
    <property type="term" value="C:cytosol"/>
    <property type="evidence" value="ECO:0007669"/>
    <property type="project" value="TreeGrafter"/>
</dbReference>
<dbReference type="GO" id="GO:0005524">
    <property type="term" value="F:ATP binding"/>
    <property type="evidence" value="ECO:0007669"/>
    <property type="project" value="UniProtKB-UniRule"/>
</dbReference>
<dbReference type="GO" id="GO:0046872">
    <property type="term" value="F:metal ion binding"/>
    <property type="evidence" value="ECO:0007669"/>
    <property type="project" value="UniProtKB-KW"/>
</dbReference>
<dbReference type="GO" id="GO:0004612">
    <property type="term" value="F:phosphoenolpyruvate carboxykinase (ATP) activity"/>
    <property type="evidence" value="ECO:0007669"/>
    <property type="project" value="UniProtKB-UniRule"/>
</dbReference>
<dbReference type="GO" id="GO:0006094">
    <property type="term" value="P:gluconeogenesis"/>
    <property type="evidence" value="ECO:0007669"/>
    <property type="project" value="UniProtKB-UniRule"/>
</dbReference>
<dbReference type="CDD" id="cd00484">
    <property type="entry name" value="PEPCK_ATP"/>
    <property type="match status" value="1"/>
</dbReference>
<dbReference type="FunFam" id="2.170.8.10:FF:000001">
    <property type="entry name" value="Phosphoenolpyruvate carboxykinase (ATP)"/>
    <property type="match status" value="1"/>
</dbReference>
<dbReference type="Gene3D" id="3.90.228.20">
    <property type="match status" value="1"/>
</dbReference>
<dbReference type="Gene3D" id="3.40.449.10">
    <property type="entry name" value="Phosphoenolpyruvate Carboxykinase, domain 1"/>
    <property type="match status" value="1"/>
</dbReference>
<dbReference type="Gene3D" id="2.170.8.10">
    <property type="entry name" value="Phosphoenolpyruvate Carboxykinase, domain 2"/>
    <property type="match status" value="1"/>
</dbReference>
<dbReference type="HAMAP" id="MF_00453">
    <property type="entry name" value="PEPCK_ATP"/>
    <property type="match status" value="1"/>
</dbReference>
<dbReference type="InterPro" id="IPR001272">
    <property type="entry name" value="PEP_carboxykinase_ATP"/>
</dbReference>
<dbReference type="InterPro" id="IPR013035">
    <property type="entry name" value="PEP_carboxykinase_C"/>
</dbReference>
<dbReference type="InterPro" id="IPR008210">
    <property type="entry name" value="PEP_carboxykinase_N"/>
</dbReference>
<dbReference type="InterPro" id="IPR015994">
    <property type="entry name" value="PEPCK_ATP_CS"/>
</dbReference>
<dbReference type="NCBIfam" id="TIGR00224">
    <property type="entry name" value="pckA"/>
    <property type="match status" value="1"/>
</dbReference>
<dbReference type="NCBIfam" id="NF006820">
    <property type="entry name" value="PRK09344.1-2"/>
    <property type="match status" value="1"/>
</dbReference>
<dbReference type="NCBIfam" id="NF006821">
    <property type="entry name" value="PRK09344.1-3"/>
    <property type="match status" value="1"/>
</dbReference>
<dbReference type="NCBIfam" id="NF006823">
    <property type="entry name" value="PRK09344.1-5"/>
    <property type="match status" value="1"/>
</dbReference>
<dbReference type="PANTHER" id="PTHR30031:SF0">
    <property type="entry name" value="PHOSPHOENOLPYRUVATE CARBOXYKINASE (ATP)"/>
    <property type="match status" value="1"/>
</dbReference>
<dbReference type="PANTHER" id="PTHR30031">
    <property type="entry name" value="PHOSPHOENOLPYRUVATE CARBOXYKINASE ATP"/>
    <property type="match status" value="1"/>
</dbReference>
<dbReference type="Pfam" id="PF01293">
    <property type="entry name" value="PEPCK_ATP"/>
    <property type="match status" value="1"/>
</dbReference>
<dbReference type="PIRSF" id="PIRSF006294">
    <property type="entry name" value="PEP_crbxkin"/>
    <property type="match status" value="1"/>
</dbReference>
<dbReference type="SUPFAM" id="SSF68923">
    <property type="entry name" value="PEP carboxykinase N-terminal domain"/>
    <property type="match status" value="1"/>
</dbReference>
<dbReference type="SUPFAM" id="SSF53795">
    <property type="entry name" value="PEP carboxykinase-like"/>
    <property type="match status" value="1"/>
</dbReference>
<dbReference type="PROSITE" id="PS00532">
    <property type="entry name" value="PEPCK_ATP"/>
    <property type="match status" value="1"/>
</dbReference>
<sequence>MADGSNREYLNLSTGQLVELALARGEGELTANGALVAKTGERSGRSPNDRFIVKEPSSEADIEWGPVNKPFEADAFTALWNRVEAYLADKDTFVSNLEVGASKEHYQPVTVTTEYAWHQLFARNLFIVPTEFNAADKPTWQIINAPGFVCNPERDGTHSDATVILNFAERKVLLAGLKYAGEMKKSMFSVQNFLLPAKGVLPMHCSANVGSDGDTTLFFGLSGTGKTTLSADPKRFLIGDDEHGWAPGGVFNIEGGCYAKCIDLSQKNEPVIWDAIRFGTVLENVVTDENRVPDYTNSTLTENTRAAYPLEHIAQRKEENCGAEPHAVVFLTCDVSGVLPPVSKLTKEQAAYHFLSGYTAKVGSTEMGSTAAIQSTFSTCFGAPFFPRPAGVYAELLMKRIESFGSQVYLVNTGWTGGPHGIGKRFDIPTTRAIVDAIVSGELKDVETEYLEKLNLHVPVAIPGVDSNLLNPINTWEDKQQYAEFAQHLAESFQKNFEKYQVPDSIKNAGPNA</sequence>
<keyword id="KW-0067">ATP-binding</keyword>
<keyword id="KW-0963">Cytoplasm</keyword>
<keyword id="KW-0210">Decarboxylase</keyword>
<keyword id="KW-0312">Gluconeogenesis</keyword>
<keyword id="KW-0456">Lyase</keyword>
<keyword id="KW-0464">Manganese</keyword>
<keyword id="KW-0479">Metal-binding</keyword>
<keyword id="KW-0547">Nucleotide-binding</keyword>
<reference key="1">
    <citation type="journal article" date="2008" name="PLoS ONE">
        <title>Environmental adaptation: genomic analysis of the piezotolerant and psychrotolerant deep-sea iron reducing bacterium Shewanella piezotolerans WP3.</title>
        <authorList>
            <person name="Wang F."/>
            <person name="Wang J."/>
            <person name="Jian H."/>
            <person name="Zhang B."/>
            <person name="Li S."/>
            <person name="Wang F."/>
            <person name="Zeng X."/>
            <person name="Gao L."/>
            <person name="Bartlett D.H."/>
            <person name="Yu J."/>
            <person name="Hu S."/>
            <person name="Xiao X."/>
        </authorList>
    </citation>
    <scope>NUCLEOTIDE SEQUENCE [LARGE SCALE GENOMIC DNA]</scope>
    <source>
        <strain>WP3 / JCM 13877</strain>
    </source>
</reference>
<accession>B8CH32</accession>